<accession>Q97CR8</accession>
<dbReference type="EC" id="6.3.4.2" evidence="1"/>
<dbReference type="EMBL" id="BA000011">
    <property type="protein sequence ID" value="BAB59175.1"/>
    <property type="molecule type" value="Genomic_DNA"/>
</dbReference>
<dbReference type="SMR" id="Q97CR8"/>
<dbReference type="STRING" id="273116.gene:9380798"/>
<dbReference type="PaxDb" id="273116-14324247"/>
<dbReference type="KEGG" id="tvo:TVG0036820"/>
<dbReference type="eggNOG" id="arCOG00063">
    <property type="taxonomic scope" value="Archaea"/>
</dbReference>
<dbReference type="HOGENOM" id="CLU_011675_5_0_2"/>
<dbReference type="OrthoDB" id="52769at2157"/>
<dbReference type="PhylomeDB" id="Q97CR8"/>
<dbReference type="UniPathway" id="UPA00159">
    <property type="reaction ID" value="UER00277"/>
</dbReference>
<dbReference type="Proteomes" id="UP000001017">
    <property type="component" value="Chromosome"/>
</dbReference>
<dbReference type="GO" id="GO:0005524">
    <property type="term" value="F:ATP binding"/>
    <property type="evidence" value="ECO:0007669"/>
    <property type="project" value="UniProtKB-KW"/>
</dbReference>
<dbReference type="GO" id="GO:0003883">
    <property type="term" value="F:CTP synthase activity"/>
    <property type="evidence" value="ECO:0007669"/>
    <property type="project" value="UniProtKB-UniRule"/>
</dbReference>
<dbReference type="GO" id="GO:0004359">
    <property type="term" value="F:glutaminase activity"/>
    <property type="evidence" value="ECO:0007669"/>
    <property type="project" value="RHEA"/>
</dbReference>
<dbReference type="GO" id="GO:0042802">
    <property type="term" value="F:identical protein binding"/>
    <property type="evidence" value="ECO:0007669"/>
    <property type="project" value="TreeGrafter"/>
</dbReference>
<dbReference type="GO" id="GO:0046872">
    <property type="term" value="F:metal ion binding"/>
    <property type="evidence" value="ECO:0007669"/>
    <property type="project" value="UniProtKB-KW"/>
</dbReference>
<dbReference type="GO" id="GO:0044210">
    <property type="term" value="P:'de novo' CTP biosynthetic process"/>
    <property type="evidence" value="ECO:0007669"/>
    <property type="project" value="UniProtKB-UniRule"/>
</dbReference>
<dbReference type="GO" id="GO:0019856">
    <property type="term" value="P:pyrimidine nucleobase biosynthetic process"/>
    <property type="evidence" value="ECO:0007669"/>
    <property type="project" value="TreeGrafter"/>
</dbReference>
<dbReference type="CDD" id="cd03113">
    <property type="entry name" value="CTPS_N"/>
    <property type="match status" value="1"/>
</dbReference>
<dbReference type="CDD" id="cd01746">
    <property type="entry name" value="GATase1_CTP_Synthase"/>
    <property type="match status" value="1"/>
</dbReference>
<dbReference type="FunFam" id="3.40.50.300:FF:000009">
    <property type="entry name" value="CTP synthase"/>
    <property type="match status" value="1"/>
</dbReference>
<dbReference type="FunFam" id="3.40.50.880:FF:000002">
    <property type="entry name" value="CTP synthase"/>
    <property type="match status" value="1"/>
</dbReference>
<dbReference type="Gene3D" id="3.40.50.880">
    <property type="match status" value="1"/>
</dbReference>
<dbReference type="Gene3D" id="3.40.50.300">
    <property type="entry name" value="P-loop containing nucleotide triphosphate hydrolases"/>
    <property type="match status" value="1"/>
</dbReference>
<dbReference type="HAMAP" id="MF_01227">
    <property type="entry name" value="PyrG"/>
    <property type="match status" value="1"/>
</dbReference>
<dbReference type="InterPro" id="IPR029062">
    <property type="entry name" value="Class_I_gatase-like"/>
</dbReference>
<dbReference type="InterPro" id="IPR004468">
    <property type="entry name" value="CTP_synthase"/>
</dbReference>
<dbReference type="InterPro" id="IPR017456">
    <property type="entry name" value="CTP_synthase_N"/>
</dbReference>
<dbReference type="InterPro" id="IPR017926">
    <property type="entry name" value="GATASE"/>
</dbReference>
<dbReference type="InterPro" id="IPR033828">
    <property type="entry name" value="GATase1_CTP_Synthase"/>
</dbReference>
<dbReference type="InterPro" id="IPR027417">
    <property type="entry name" value="P-loop_NTPase"/>
</dbReference>
<dbReference type="NCBIfam" id="NF003792">
    <property type="entry name" value="PRK05380.1"/>
    <property type="match status" value="1"/>
</dbReference>
<dbReference type="NCBIfam" id="TIGR00337">
    <property type="entry name" value="PyrG"/>
    <property type="match status" value="1"/>
</dbReference>
<dbReference type="PANTHER" id="PTHR11550">
    <property type="entry name" value="CTP SYNTHASE"/>
    <property type="match status" value="1"/>
</dbReference>
<dbReference type="PANTHER" id="PTHR11550:SF0">
    <property type="entry name" value="CTP SYNTHASE-RELATED"/>
    <property type="match status" value="1"/>
</dbReference>
<dbReference type="Pfam" id="PF06418">
    <property type="entry name" value="CTP_synth_N"/>
    <property type="match status" value="1"/>
</dbReference>
<dbReference type="Pfam" id="PF00117">
    <property type="entry name" value="GATase"/>
    <property type="match status" value="1"/>
</dbReference>
<dbReference type="SUPFAM" id="SSF52317">
    <property type="entry name" value="Class I glutamine amidotransferase-like"/>
    <property type="match status" value="1"/>
</dbReference>
<dbReference type="SUPFAM" id="SSF52540">
    <property type="entry name" value="P-loop containing nucleoside triphosphate hydrolases"/>
    <property type="match status" value="1"/>
</dbReference>
<dbReference type="PROSITE" id="PS51273">
    <property type="entry name" value="GATASE_TYPE_1"/>
    <property type="match status" value="1"/>
</dbReference>
<feature type="chain" id="PRO_0000138273" description="CTP synthase">
    <location>
        <begin position="1"/>
        <end position="540"/>
    </location>
</feature>
<feature type="domain" description="Glutamine amidotransferase type-1" evidence="1">
    <location>
        <begin position="294"/>
        <end position="527"/>
    </location>
</feature>
<feature type="region of interest" description="Amidoligase domain" evidence="1">
    <location>
        <begin position="1"/>
        <end position="264"/>
    </location>
</feature>
<feature type="active site" description="Nucleophile; for glutamine hydrolysis" evidence="1">
    <location>
        <position position="374"/>
    </location>
</feature>
<feature type="active site" evidence="1">
    <location>
        <position position="500"/>
    </location>
</feature>
<feature type="active site" evidence="1">
    <location>
        <position position="502"/>
    </location>
</feature>
<feature type="binding site" evidence="1">
    <location>
        <position position="12"/>
    </location>
    <ligand>
        <name>CTP</name>
        <dbReference type="ChEBI" id="CHEBI:37563"/>
        <note>allosteric inhibitor</note>
    </ligand>
</feature>
<feature type="binding site" evidence="1">
    <location>
        <position position="12"/>
    </location>
    <ligand>
        <name>UTP</name>
        <dbReference type="ChEBI" id="CHEBI:46398"/>
    </ligand>
</feature>
<feature type="binding site" evidence="1">
    <location>
        <begin position="13"/>
        <end position="18"/>
    </location>
    <ligand>
        <name>ATP</name>
        <dbReference type="ChEBI" id="CHEBI:30616"/>
    </ligand>
</feature>
<feature type="binding site" evidence="1">
    <location>
        <position position="53"/>
    </location>
    <ligand>
        <name>L-glutamine</name>
        <dbReference type="ChEBI" id="CHEBI:58359"/>
    </ligand>
</feature>
<feature type="binding site" evidence="1">
    <location>
        <position position="70"/>
    </location>
    <ligand>
        <name>ATP</name>
        <dbReference type="ChEBI" id="CHEBI:30616"/>
    </ligand>
</feature>
<feature type="binding site" evidence="1">
    <location>
        <position position="70"/>
    </location>
    <ligand>
        <name>Mg(2+)</name>
        <dbReference type="ChEBI" id="CHEBI:18420"/>
    </ligand>
</feature>
<feature type="binding site" evidence="1">
    <location>
        <position position="140"/>
    </location>
    <ligand>
        <name>Mg(2+)</name>
        <dbReference type="ChEBI" id="CHEBI:18420"/>
    </ligand>
</feature>
<feature type="binding site" evidence="1">
    <location>
        <begin position="147"/>
        <end position="149"/>
    </location>
    <ligand>
        <name>CTP</name>
        <dbReference type="ChEBI" id="CHEBI:37563"/>
        <note>allosteric inhibitor</note>
    </ligand>
</feature>
<feature type="binding site" evidence="1">
    <location>
        <begin position="185"/>
        <end position="190"/>
    </location>
    <ligand>
        <name>CTP</name>
        <dbReference type="ChEBI" id="CHEBI:37563"/>
        <note>allosteric inhibitor</note>
    </ligand>
</feature>
<feature type="binding site" evidence="1">
    <location>
        <begin position="185"/>
        <end position="190"/>
    </location>
    <ligand>
        <name>UTP</name>
        <dbReference type="ChEBI" id="CHEBI:46398"/>
    </ligand>
</feature>
<feature type="binding site" evidence="1">
    <location>
        <position position="221"/>
    </location>
    <ligand>
        <name>CTP</name>
        <dbReference type="ChEBI" id="CHEBI:37563"/>
        <note>allosteric inhibitor</note>
    </ligand>
</feature>
<feature type="binding site" evidence="1">
    <location>
        <position position="221"/>
    </location>
    <ligand>
        <name>UTP</name>
        <dbReference type="ChEBI" id="CHEBI:46398"/>
    </ligand>
</feature>
<feature type="binding site" evidence="1">
    <location>
        <position position="347"/>
    </location>
    <ligand>
        <name>L-glutamine</name>
        <dbReference type="ChEBI" id="CHEBI:58359"/>
    </ligand>
</feature>
<feature type="binding site" evidence="1">
    <location>
        <begin position="375"/>
        <end position="378"/>
    </location>
    <ligand>
        <name>L-glutamine</name>
        <dbReference type="ChEBI" id="CHEBI:58359"/>
    </ligand>
</feature>
<feature type="binding site" evidence="1">
    <location>
        <position position="398"/>
    </location>
    <ligand>
        <name>L-glutamine</name>
        <dbReference type="ChEBI" id="CHEBI:58359"/>
    </ligand>
</feature>
<feature type="binding site" evidence="1">
    <location>
        <position position="455"/>
    </location>
    <ligand>
        <name>L-glutamine</name>
        <dbReference type="ChEBI" id="CHEBI:58359"/>
    </ligand>
</feature>
<sequence>MQYIVVTGGVISGLGKGTITSSIGHILKDSGFKVSSVKIDPYINYDAGTMNPYQHGEVFVLDDGSEVDLDLGNYERFMDINLSWKNNITTGKVYLEVIEKERHGDYLGKTVQIIPHITDEIKRRIRDVATSSKADFVLIEVGGTVGDIESMPFLEAVRQLKREENNVIFAHVTLVPEIGPTEEQKTKPTQHSVKALREIGIQPDIIFARSKNRLLEETKKRISLFTDVPEGGIISVYDVENVYLLPEVMVNEGFISYLSKLSGKEIKYRDSWKAYTENIKHPKDRVKIAIVGKYVDLHDAYISHKEAFSHVTGNTGIAVDIKWLDSEKVKDDQSMLSDVDAILIPGGFGYRGVEGKIAATRFALENHIPFLGICLGFQVAVIEIARDIIGLQNANSTEFDPATKYPVIDILPEQKGIKDLGGTMRLGSKKVLIKDGTLAKRIYGTDTIYERHRHRYEVNPNYISIIEKAGFVFSGTDEDGIRMEILEKKGDESFIATQYHSEFKSRPLNPSRVHLHLVQQALIYKKNKDIGEAVKLRSSV</sequence>
<organism>
    <name type="scientific">Thermoplasma volcanium (strain ATCC 51530 / DSM 4299 / JCM 9571 / NBRC 15438 / GSS1)</name>
    <dbReference type="NCBI Taxonomy" id="273116"/>
    <lineage>
        <taxon>Archaea</taxon>
        <taxon>Methanobacteriati</taxon>
        <taxon>Thermoplasmatota</taxon>
        <taxon>Thermoplasmata</taxon>
        <taxon>Thermoplasmatales</taxon>
        <taxon>Thermoplasmataceae</taxon>
        <taxon>Thermoplasma</taxon>
    </lineage>
</organism>
<reference key="1">
    <citation type="journal article" date="2000" name="Proc. Natl. Acad. Sci. U.S.A.">
        <title>Archaeal adaptation to higher temperatures revealed by genomic sequence of Thermoplasma volcanium.</title>
        <authorList>
            <person name="Kawashima T."/>
            <person name="Amano N."/>
            <person name="Koike H."/>
            <person name="Makino S."/>
            <person name="Higuchi S."/>
            <person name="Kawashima-Ohya Y."/>
            <person name="Watanabe K."/>
            <person name="Yamazaki M."/>
            <person name="Kanehori K."/>
            <person name="Kawamoto T."/>
            <person name="Nunoshiba T."/>
            <person name="Yamamoto Y."/>
            <person name="Aramaki H."/>
            <person name="Makino K."/>
            <person name="Suzuki M."/>
        </authorList>
    </citation>
    <scope>NUCLEOTIDE SEQUENCE [LARGE SCALE GENOMIC DNA]</scope>
    <source>
        <strain>ATCC 51530 / DSM 4299 / JCM 9571 / NBRC 15438 / GSS1</strain>
    </source>
</reference>
<name>PYRG_THEVO</name>
<protein>
    <recommendedName>
        <fullName evidence="1">CTP synthase</fullName>
        <ecNumber evidence="1">6.3.4.2</ecNumber>
    </recommendedName>
    <alternativeName>
        <fullName evidence="1">Cytidine 5'-triphosphate synthase</fullName>
    </alternativeName>
    <alternativeName>
        <fullName evidence="1">Cytidine triphosphate synthetase</fullName>
        <shortName evidence="1">CTP synthetase</shortName>
        <shortName evidence="1">CTPS</shortName>
    </alternativeName>
    <alternativeName>
        <fullName evidence="1">UTP--ammonia ligase</fullName>
    </alternativeName>
</protein>
<gene>
    <name evidence="1" type="primary">pyrG</name>
    <name type="ordered locus">TV0033</name>
    <name type="ORF">TVG0036820</name>
</gene>
<keyword id="KW-0067">ATP-binding</keyword>
<keyword id="KW-0315">Glutamine amidotransferase</keyword>
<keyword id="KW-0436">Ligase</keyword>
<keyword id="KW-0460">Magnesium</keyword>
<keyword id="KW-0479">Metal-binding</keyword>
<keyword id="KW-0547">Nucleotide-binding</keyword>
<keyword id="KW-0665">Pyrimidine biosynthesis</keyword>
<proteinExistence type="inferred from homology"/>
<evidence type="ECO:0000255" key="1">
    <source>
        <dbReference type="HAMAP-Rule" id="MF_01227"/>
    </source>
</evidence>
<comment type="function">
    <text evidence="1">Catalyzes the ATP-dependent amination of UTP to CTP with either L-glutamine or ammonia as the source of nitrogen. Regulates intracellular CTP levels through interactions with the four ribonucleotide triphosphates.</text>
</comment>
<comment type="catalytic activity">
    <reaction evidence="1">
        <text>UTP + L-glutamine + ATP + H2O = CTP + L-glutamate + ADP + phosphate + 2 H(+)</text>
        <dbReference type="Rhea" id="RHEA:26426"/>
        <dbReference type="ChEBI" id="CHEBI:15377"/>
        <dbReference type="ChEBI" id="CHEBI:15378"/>
        <dbReference type="ChEBI" id="CHEBI:29985"/>
        <dbReference type="ChEBI" id="CHEBI:30616"/>
        <dbReference type="ChEBI" id="CHEBI:37563"/>
        <dbReference type="ChEBI" id="CHEBI:43474"/>
        <dbReference type="ChEBI" id="CHEBI:46398"/>
        <dbReference type="ChEBI" id="CHEBI:58359"/>
        <dbReference type="ChEBI" id="CHEBI:456216"/>
        <dbReference type="EC" id="6.3.4.2"/>
    </reaction>
</comment>
<comment type="catalytic activity">
    <reaction evidence="1">
        <text>L-glutamine + H2O = L-glutamate + NH4(+)</text>
        <dbReference type="Rhea" id="RHEA:15889"/>
        <dbReference type="ChEBI" id="CHEBI:15377"/>
        <dbReference type="ChEBI" id="CHEBI:28938"/>
        <dbReference type="ChEBI" id="CHEBI:29985"/>
        <dbReference type="ChEBI" id="CHEBI:58359"/>
    </reaction>
</comment>
<comment type="catalytic activity">
    <reaction evidence="1">
        <text>UTP + NH4(+) + ATP = CTP + ADP + phosphate + 2 H(+)</text>
        <dbReference type="Rhea" id="RHEA:16597"/>
        <dbReference type="ChEBI" id="CHEBI:15378"/>
        <dbReference type="ChEBI" id="CHEBI:28938"/>
        <dbReference type="ChEBI" id="CHEBI:30616"/>
        <dbReference type="ChEBI" id="CHEBI:37563"/>
        <dbReference type="ChEBI" id="CHEBI:43474"/>
        <dbReference type="ChEBI" id="CHEBI:46398"/>
        <dbReference type="ChEBI" id="CHEBI:456216"/>
    </reaction>
</comment>
<comment type="activity regulation">
    <text evidence="1">Allosterically activated by GTP, when glutamine is the substrate; GTP has no effect on the reaction when ammonia is the substrate. The allosteric effector GTP functions by stabilizing the protein conformation that binds the tetrahedral intermediate(s) formed during glutamine hydrolysis. Inhibited by the product CTP, via allosteric rather than competitive inhibition.</text>
</comment>
<comment type="pathway">
    <text evidence="1">Pyrimidine metabolism; CTP biosynthesis via de novo pathway; CTP from UDP: step 2/2.</text>
</comment>
<comment type="subunit">
    <text evidence="1">Homotetramer.</text>
</comment>
<comment type="miscellaneous">
    <text evidence="1">CTPSs have evolved a hybrid strategy for distinguishing between UTP and CTP. The overlapping regions of the product feedback inhibitory and substrate sites recognize a common feature in both compounds, the triphosphate moiety. To differentiate isosteric substrate and product pyrimidine rings, an additional pocket far from the expected kinase/ligase catalytic site, specifically recognizes the cytosine and ribose portions of the product inhibitor.</text>
</comment>
<comment type="similarity">
    <text evidence="1">Belongs to the CTP synthase family.</text>
</comment>